<sequence length="554" mass="62974">MPTINVNKIDLEKLINMSLSDKTIDHKFPMMGVEVEEIFEENNQKIVQFSINPDRPDYLSVEGLARGFRGFIGIDAGLPKYDIYASDLEVYVENVKSRPYCGFAIIKNIIIDDLVLESIINLQEKLHWSIGRDRKKMAIGIHDLDKIEAPFYYKEINGDEIEFEPLGHNELMTPKEVLEKHEKGVKYAHLLRGDKFPIIVDKNNAVISMPPIINGNLTKVGTETRNLLVEITGTDKNAVENTLNIIVCALADRRGTIFSLKLINNGNETISPDLTPDSAEITIDEINTRLGLNLNAGEIIACLKKARYDAQYSYEDENIKITIPAYRTDILNNMDIIKDVAINYGYENFNGNLPVVATIGEKHDIEKKFEFIRNTMIGYGLFEVMNLTLSNQDVLFNKMNENIEDNEYVEVLKPASIEHRVVRPTILPLLLETLANNKHNELPQKIFEVGDCVVIDEKDETLYTHCKNVPKVSAVITHHNANFNEIKGLVEGLIREMNIEYSIDNYKHPSFIEGRCAKIIVDDEIVGYFGELHPEVILNFELGYPVVGFEMEIK</sequence>
<protein>
    <recommendedName>
        <fullName evidence="1">Phenylalanine--tRNA ligase beta subunit</fullName>
        <ecNumber evidence="1">6.1.1.20</ecNumber>
    </recommendedName>
    <alternativeName>
        <fullName evidence="1">Phenylalanyl-tRNA synthetase beta subunit</fullName>
        <shortName evidence="1">PheRS</shortName>
    </alternativeName>
</protein>
<keyword id="KW-0030">Aminoacyl-tRNA synthetase</keyword>
<keyword id="KW-0067">ATP-binding</keyword>
<keyword id="KW-0963">Cytoplasm</keyword>
<keyword id="KW-0436">Ligase</keyword>
<keyword id="KW-0460">Magnesium</keyword>
<keyword id="KW-0479">Metal-binding</keyword>
<keyword id="KW-0547">Nucleotide-binding</keyword>
<keyword id="KW-0648">Protein biosynthesis</keyword>
<name>SYFB_META3</name>
<proteinExistence type="inferred from homology"/>
<feature type="chain" id="PRO_1000022416" description="Phenylalanine--tRNA ligase beta subunit">
    <location>
        <begin position="1"/>
        <end position="554"/>
    </location>
</feature>
<feature type="domain" description="B5" evidence="1">
    <location>
        <begin position="274"/>
        <end position="351"/>
    </location>
</feature>
<feature type="binding site" evidence="1">
    <location>
        <position position="329"/>
    </location>
    <ligand>
        <name>Mg(2+)</name>
        <dbReference type="ChEBI" id="CHEBI:18420"/>
        <note>shared with alpha subunit</note>
    </ligand>
</feature>
<feature type="binding site" evidence="1">
    <location>
        <position position="335"/>
    </location>
    <ligand>
        <name>Mg(2+)</name>
        <dbReference type="ChEBI" id="CHEBI:18420"/>
        <note>shared with alpha subunit</note>
    </ligand>
</feature>
<feature type="binding site" evidence="1">
    <location>
        <position position="339"/>
    </location>
    <ligand>
        <name>Mg(2+)</name>
        <dbReference type="ChEBI" id="CHEBI:18420"/>
        <note>shared with alpha subunit</note>
    </ligand>
</feature>
<dbReference type="EC" id="6.1.1.20" evidence="1"/>
<dbReference type="EMBL" id="CP000743">
    <property type="protein sequence ID" value="ABR56953.1"/>
    <property type="molecule type" value="Genomic_DNA"/>
</dbReference>
<dbReference type="RefSeq" id="WP_011974085.1">
    <property type="nucleotide sequence ID" value="NC_009635.1"/>
</dbReference>
<dbReference type="SMR" id="A6UWT1"/>
<dbReference type="STRING" id="419665.Maeo_1377"/>
<dbReference type="GeneID" id="5326998"/>
<dbReference type="KEGG" id="mae:Maeo_1377"/>
<dbReference type="eggNOG" id="arCOG00412">
    <property type="taxonomic scope" value="Archaea"/>
</dbReference>
<dbReference type="HOGENOM" id="CLU_020279_3_0_2"/>
<dbReference type="OrthoDB" id="10073at2157"/>
<dbReference type="Proteomes" id="UP000001106">
    <property type="component" value="Chromosome"/>
</dbReference>
<dbReference type="GO" id="GO:0009328">
    <property type="term" value="C:phenylalanine-tRNA ligase complex"/>
    <property type="evidence" value="ECO:0007669"/>
    <property type="project" value="TreeGrafter"/>
</dbReference>
<dbReference type="GO" id="GO:0005524">
    <property type="term" value="F:ATP binding"/>
    <property type="evidence" value="ECO:0007669"/>
    <property type="project" value="UniProtKB-UniRule"/>
</dbReference>
<dbReference type="GO" id="GO:0000287">
    <property type="term" value="F:magnesium ion binding"/>
    <property type="evidence" value="ECO:0007669"/>
    <property type="project" value="InterPro"/>
</dbReference>
<dbReference type="GO" id="GO:0004826">
    <property type="term" value="F:phenylalanine-tRNA ligase activity"/>
    <property type="evidence" value="ECO:0007669"/>
    <property type="project" value="UniProtKB-UniRule"/>
</dbReference>
<dbReference type="GO" id="GO:0003723">
    <property type="term" value="F:RNA binding"/>
    <property type="evidence" value="ECO:0007669"/>
    <property type="project" value="InterPro"/>
</dbReference>
<dbReference type="GO" id="GO:0006432">
    <property type="term" value="P:phenylalanyl-tRNA aminoacylation"/>
    <property type="evidence" value="ECO:0007669"/>
    <property type="project" value="UniProtKB-UniRule"/>
</dbReference>
<dbReference type="CDD" id="cd00769">
    <property type="entry name" value="PheRS_beta_core"/>
    <property type="match status" value="1"/>
</dbReference>
<dbReference type="FunFam" id="3.30.56.10:FF:000011">
    <property type="entry name" value="Phenylalanine--tRNA ligase beta subunit"/>
    <property type="match status" value="1"/>
</dbReference>
<dbReference type="FunFam" id="3.50.40.10:FF:000003">
    <property type="entry name" value="Phenylalanine--tRNA ligase beta subunit"/>
    <property type="match status" value="1"/>
</dbReference>
<dbReference type="Gene3D" id="3.30.56.10">
    <property type="match status" value="2"/>
</dbReference>
<dbReference type="Gene3D" id="3.30.930.10">
    <property type="entry name" value="Bira Bifunctional Protein, Domain 2"/>
    <property type="match status" value="1"/>
</dbReference>
<dbReference type="Gene3D" id="3.50.40.10">
    <property type="entry name" value="Phenylalanyl-trna Synthetase, Chain B, domain 3"/>
    <property type="match status" value="1"/>
</dbReference>
<dbReference type="HAMAP" id="MF_00284">
    <property type="entry name" value="Phe_tRNA_synth_beta2"/>
    <property type="match status" value="1"/>
</dbReference>
<dbReference type="InterPro" id="IPR045864">
    <property type="entry name" value="aa-tRNA-synth_II/BPL/LPL"/>
</dbReference>
<dbReference type="InterPro" id="IPR005146">
    <property type="entry name" value="B3/B4_tRNA-bd"/>
</dbReference>
<dbReference type="InterPro" id="IPR009061">
    <property type="entry name" value="DNA-bd_dom_put_sf"/>
</dbReference>
<dbReference type="InterPro" id="IPR045060">
    <property type="entry name" value="Phe-tRNA-ligase_IIc_bsu"/>
</dbReference>
<dbReference type="InterPro" id="IPR004531">
    <property type="entry name" value="Phe-tRNA-synth_IIc_bsu_arc_euk"/>
</dbReference>
<dbReference type="InterPro" id="IPR020825">
    <property type="entry name" value="Phe-tRNA_synthase-like_B3/B4"/>
</dbReference>
<dbReference type="InterPro" id="IPR022918">
    <property type="entry name" value="Phe_tRNA_ligase_beta2_arc"/>
</dbReference>
<dbReference type="InterPro" id="IPR041616">
    <property type="entry name" value="PheRS_beta_core"/>
</dbReference>
<dbReference type="InterPro" id="IPR040659">
    <property type="entry name" value="PhetRS_B1"/>
</dbReference>
<dbReference type="InterPro" id="IPR005147">
    <property type="entry name" value="tRNA_synthase_B5-dom"/>
</dbReference>
<dbReference type="NCBIfam" id="TIGR00471">
    <property type="entry name" value="pheT_arch"/>
    <property type="match status" value="1"/>
</dbReference>
<dbReference type="PANTHER" id="PTHR10947:SF0">
    <property type="entry name" value="PHENYLALANINE--TRNA LIGASE BETA SUBUNIT"/>
    <property type="match status" value="1"/>
</dbReference>
<dbReference type="PANTHER" id="PTHR10947">
    <property type="entry name" value="PHENYLALANYL-TRNA SYNTHETASE BETA CHAIN AND LEUCINE-RICH REPEAT-CONTAINING PROTEIN 47"/>
    <property type="match status" value="1"/>
</dbReference>
<dbReference type="Pfam" id="PF03483">
    <property type="entry name" value="B3_4"/>
    <property type="match status" value="1"/>
</dbReference>
<dbReference type="Pfam" id="PF03484">
    <property type="entry name" value="B5"/>
    <property type="match status" value="1"/>
</dbReference>
<dbReference type="Pfam" id="PF18262">
    <property type="entry name" value="PhetRS_B1"/>
    <property type="match status" value="1"/>
</dbReference>
<dbReference type="Pfam" id="PF17759">
    <property type="entry name" value="tRNA_synthFbeta"/>
    <property type="match status" value="1"/>
</dbReference>
<dbReference type="SMART" id="SM00873">
    <property type="entry name" value="B3_4"/>
    <property type="match status" value="1"/>
</dbReference>
<dbReference type="SMART" id="SM00874">
    <property type="entry name" value="B5"/>
    <property type="match status" value="1"/>
</dbReference>
<dbReference type="SUPFAM" id="SSF55681">
    <property type="entry name" value="Class II aaRS and biotin synthetases"/>
    <property type="match status" value="1"/>
</dbReference>
<dbReference type="SUPFAM" id="SSF46955">
    <property type="entry name" value="Putative DNA-binding domain"/>
    <property type="match status" value="2"/>
</dbReference>
<dbReference type="PROSITE" id="PS51483">
    <property type="entry name" value="B5"/>
    <property type="match status" value="1"/>
</dbReference>
<comment type="catalytic activity">
    <reaction evidence="1">
        <text>tRNA(Phe) + L-phenylalanine + ATP = L-phenylalanyl-tRNA(Phe) + AMP + diphosphate + H(+)</text>
        <dbReference type="Rhea" id="RHEA:19413"/>
        <dbReference type="Rhea" id="RHEA-COMP:9668"/>
        <dbReference type="Rhea" id="RHEA-COMP:9699"/>
        <dbReference type="ChEBI" id="CHEBI:15378"/>
        <dbReference type="ChEBI" id="CHEBI:30616"/>
        <dbReference type="ChEBI" id="CHEBI:33019"/>
        <dbReference type="ChEBI" id="CHEBI:58095"/>
        <dbReference type="ChEBI" id="CHEBI:78442"/>
        <dbReference type="ChEBI" id="CHEBI:78531"/>
        <dbReference type="ChEBI" id="CHEBI:456215"/>
        <dbReference type="EC" id="6.1.1.20"/>
    </reaction>
</comment>
<comment type="cofactor">
    <cofactor evidence="1">
        <name>Mg(2+)</name>
        <dbReference type="ChEBI" id="CHEBI:18420"/>
    </cofactor>
</comment>
<comment type="subunit">
    <text evidence="1">Tetramer of two alpha and two beta subunits.</text>
</comment>
<comment type="subcellular location">
    <subcellularLocation>
        <location evidence="1">Cytoplasm</location>
    </subcellularLocation>
</comment>
<comment type="similarity">
    <text evidence="1">Belongs to the phenylalanyl-tRNA synthetase beta subunit family. Type 2 subfamily.</text>
</comment>
<accession>A6UWT1</accession>
<organism>
    <name type="scientific">Methanococcus aeolicus (strain ATCC BAA-1280 / DSM 17508 / OCM 812 / Nankai-3)</name>
    <dbReference type="NCBI Taxonomy" id="419665"/>
    <lineage>
        <taxon>Archaea</taxon>
        <taxon>Methanobacteriati</taxon>
        <taxon>Methanobacteriota</taxon>
        <taxon>Methanomada group</taxon>
        <taxon>Methanococci</taxon>
        <taxon>Methanococcales</taxon>
        <taxon>Methanococcaceae</taxon>
        <taxon>Methanococcus</taxon>
    </lineage>
</organism>
<gene>
    <name evidence="1" type="primary">pheT</name>
    <name type="ordered locus">Maeo_1377</name>
</gene>
<evidence type="ECO:0000255" key="1">
    <source>
        <dbReference type="HAMAP-Rule" id="MF_00284"/>
    </source>
</evidence>
<reference key="1">
    <citation type="submission" date="2007-06" db="EMBL/GenBank/DDBJ databases">
        <title>Complete sequence of Methanococcus aeolicus Nankai-3.</title>
        <authorList>
            <consortium name="US DOE Joint Genome Institute"/>
            <person name="Copeland A."/>
            <person name="Lucas S."/>
            <person name="Lapidus A."/>
            <person name="Barry K."/>
            <person name="Glavina del Rio T."/>
            <person name="Dalin E."/>
            <person name="Tice H."/>
            <person name="Pitluck S."/>
            <person name="Chain P."/>
            <person name="Malfatti S."/>
            <person name="Shin M."/>
            <person name="Vergez L."/>
            <person name="Schmutz J."/>
            <person name="Larimer F."/>
            <person name="Land M."/>
            <person name="Hauser L."/>
            <person name="Kyrpides N."/>
            <person name="Lykidis A."/>
            <person name="Sieprawska-Lupa M."/>
            <person name="Whitman W.B."/>
            <person name="Richardson P."/>
        </authorList>
    </citation>
    <scope>NUCLEOTIDE SEQUENCE [LARGE SCALE GENOMIC DNA]</scope>
    <source>
        <strain>ATCC BAA-1280 / DSM 17508 / OCM 812 / Nankai-3</strain>
    </source>
</reference>